<name>RB11A_DICDI</name>
<comment type="function">
    <text evidence="3">Required for normal contractile vacuole structure and function. Cells expressing a dominant negative rab11A exhibit a more extensive contractile vacuole network and enlarged contractile vacuole bladders. These cells exhibit a functional defect in osmotic regulation where cells immersed in water become rounded and detach from the surface, and contain swollen contractile vacuoles.</text>
</comment>
<comment type="subcellular location">
    <subcellularLocation>
        <location evidence="3">Contractile vacuole membrane</location>
        <topology evidence="3">Lipid-anchor</topology>
        <orientation evidence="3">Cytoplasmic side</orientation>
    </subcellularLocation>
</comment>
<comment type="similarity">
    <text evidence="4">Belongs to the small GTPase superfamily. Rab family.</text>
</comment>
<accession>P36412</accession>
<accession>Q55CC4</accession>
<feature type="chain" id="PRO_0000121274" description="Ras-related protein Rab-11A">
    <location>
        <begin position="1"/>
        <end position="214"/>
    </location>
</feature>
<feature type="short sequence motif" description="Effector region" evidence="1">
    <location>
        <begin position="42"/>
        <end position="50"/>
    </location>
</feature>
<feature type="binding site" evidence="2">
    <location>
        <begin position="20"/>
        <end position="28"/>
    </location>
    <ligand>
        <name>GTP</name>
        <dbReference type="ChEBI" id="CHEBI:37565"/>
    </ligand>
</feature>
<feature type="binding site" evidence="2">
    <location>
        <begin position="39"/>
        <end position="45"/>
    </location>
    <ligand>
        <name>GTP</name>
        <dbReference type="ChEBI" id="CHEBI:37565"/>
    </ligand>
</feature>
<feature type="binding site" evidence="2">
    <location>
        <begin position="68"/>
        <end position="72"/>
    </location>
    <ligand>
        <name>GTP</name>
        <dbReference type="ChEBI" id="CHEBI:37565"/>
    </ligand>
</feature>
<feature type="binding site" evidence="2">
    <location>
        <begin position="126"/>
        <end position="129"/>
    </location>
    <ligand>
        <name>GTP</name>
        <dbReference type="ChEBI" id="CHEBI:37565"/>
    </ligand>
</feature>
<feature type="binding site" evidence="2">
    <location>
        <begin position="156"/>
        <end position="158"/>
    </location>
    <ligand>
        <name>GTP</name>
        <dbReference type="ChEBI" id="CHEBI:37565"/>
    </ligand>
</feature>
<feature type="lipid moiety-binding region" description="S-geranylgeranyl cysteine" evidence="1">
    <location>
        <position position="213"/>
    </location>
</feature>
<feature type="lipid moiety-binding region" description="S-geranylgeranyl cysteine" evidence="1">
    <location>
        <position position="214"/>
    </location>
</feature>
<feature type="mutagenesis site" description="Loss of GTP-binding activity." evidence="3">
    <original>N</original>
    <variation>I</variation>
    <location>
        <position position="126"/>
    </location>
</feature>
<gene>
    <name type="primary">rab11A</name>
    <name type="synonym">rab11</name>
    <name type="ORF">DDB_G0269238</name>
</gene>
<proteinExistence type="evidence at protein level"/>
<keyword id="KW-0342">GTP-binding</keyword>
<keyword id="KW-0449">Lipoprotein</keyword>
<keyword id="KW-0472">Membrane</keyword>
<keyword id="KW-0547">Nucleotide-binding</keyword>
<keyword id="KW-0636">Prenylation</keyword>
<keyword id="KW-0653">Protein transport</keyword>
<keyword id="KW-1185">Reference proteome</keyword>
<keyword id="KW-0813">Transport</keyword>
<keyword id="KW-0926">Vacuole</keyword>
<sequence length="214" mass="23986">MTSKGSQEEYDYLYKIVLIGDSGVGKSNLLSRFTRNEFSLETKSTIGVEFATRTIQTEGKTIKAQVWDTAGQERYRAITSAYYRGAVGALLVYDIAKQATYKSVERWILELRENADRNIEIMLVGNKSDLRHLREVSTDEAKEFSEKHKLTFIETSALDSSNVELAFQNILTQIYHIMSRPSHSTGPQTTIDSNTETIILPTTSEPPAAKSGCC</sequence>
<dbReference type="EMBL" id="U02925">
    <property type="protein sequence ID" value="AAA80149.1"/>
    <property type="molecule type" value="mRNA"/>
</dbReference>
<dbReference type="EMBL" id="AAFI02000005">
    <property type="protein sequence ID" value="EAL71969.1"/>
    <property type="molecule type" value="Genomic_DNA"/>
</dbReference>
<dbReference type="RefSeq" id="XP_646557.1">
    <property type="nucleotide sequence ID" value="XM_641465.1"/>
</dbReference>
<dbReference type="SMR" id="P36412"/>
<dbReference type="FunCoup" id="P36412">
    <property type="interactions" value="707"/>
</dbReference>
<dbReference type="IntAct" id="P36412">
    <property type="interactions" value="2"/>
</dbReference>
<dbReference type="MINT" id="P36412"/>
<dbReference type="STRING" id="44689.P36412"/>
<dbReference type="PaxDb" id="44689-DDB0191190"/>
<dbReference type="EnsemblProtists" id="EAL71969">
    <property type="protein sequence ID" value="EAL71969"/>
    <property type="gene ID" value="DDB_G0269238"/>
</dbReference>
<dbReference type="GeneID" id="8617525"/>
<dbReference type="KEGG" id="ddi:DDB_G0269238"/>
<dbReference type="dictyBase" id="DDB_G0269238">
    <property type="gene designation" value="rab11A"/>
</dbReference>
<dbReference type="VEuPathDB" id="AmoebaDB:DDB_G0269238"/>
<dbReference type="eggNOG" id="KOG0087">
    <property type="taxonomic scope" value="Eukaryota"/>
</dbReference>
<dbReference type="HOGENOM" id="CLU_041217_23_0_1"/>
<dbReference type="InParanoid" id="P36412"/>
<dbReference type="OMA" id="ITAIYQM"/>
<dbReference type="PhylomeDB" id="P36412"/>
<dbReference type="Reactome" id="R-DDI-8854214">
    <property type="pathway name" value="TBC/RABGAPs"/>
</dbReference>
<dbReference type="Reactome" id="R-DDI-8873719">
    <property type="pathway name" value="RAB geranylgeranylation"/>
</dbReference>
<dbReference type="PRO" id="PR:P36412"/>
<dbReference type="Proteomes" id="UP000002195">
    <property type="component" value="Chromosome 1"/>
</dbReference>
<dbReference type="GO" id="GO:0031164">
    <property type="term" value="C:contractile vacuolar membrane"/>
    <property type="evidence" value="ECO:0000314"/>
    <property type="project" value="UniProtKB"/>
</dbReference>
<dbReference type="GO" id="GO:0000331">
    <property type="term" value="C:contractile vacuole"/>
    <property type="evidence" value="ECO:0000314"/>
    <property type="project" value="dictyBase"/>
</dbReference>
<dbReference type="GO" id="GO:0005794">
    <property type="term" value="C:Golgi apparatus"/>
    <property type="evidence" value="ECO:0000318"/>
    <property type="project" value="GO_Central"/>
</dbReference>
<dbReference type="GO" id="GO:0005811">
    <property type="term" value="C:lipid droplet"/>
    <property type="evidence" value="ECO:0007005"/>
    <property type="project" value="dictyBase"/>
</dbReference>
<dbReference type="GO" id="GO:0045121">
    <property type="term" value="C:membrane raft"/>
    <property type="evidence" value="ECO:0000314"/>
    <property type="project" value="dictyBase"/>
</dbReference>
<dbReference type="GO" id="GO:0140220">
    <property type="term" value="C:pathogen-containing vacuole"/>
    <property type="evidence" value="ECO:0000314"/>
    <property type="project" value="dictyBase"/>
</dbReference>
<dbReference type="GO" id="GO:0045335">
    <property type="term" value="C:phagocytic vesicle"/>
    <property type="evidence" value="ECO:0007005"/>
    <property type="project" value="dictyBase"/>
</dbReference>
<dbReference type="GO" id="GO:0055037">
    <property type="term" value="C:recycling endosome"/>
    <property type="evidence" value="ECO:0000318"/>
    <property type="project" value="GO_Central"/>
</dbReference>
<dbReference type="GO" id="GO:0005525">
    <property type="term" value="F:GTP binding"/>
    <property type="evidence" value="ECO:0000314"/>
    <property type="project" value="UniProtKB"/>
</dbReference>
<dbReference type="GO" id="GO:0032794">
    <property type="term" value="F:GTPase activating protein binding"/>
    <property type="evidence" value="ECO:0000353"/>
    <property type="project" value="dictyBase"/>
</dbReference>
<dbReference type="GO" id="GO:0003924">
    <property type="term" value="F:GTPase activity"/>
    <property type="evidence" value="ECO:0000318"/>
    <property type="project" value="GO_Central"/>
</dbReference>
<dbReference type="GO" id="GO:0000166">
    <property type="term" value="F:nucleotide binding"/>
    <property type="evidence" value="ECO:0000314"/>
    <property type="project" value="UniProtKB"/>
</dbReference>
<dbReference type="GO" id="GO:0071476">
    <property type="term" value="P:cellular hypotonic response"/>
    <property type="evidence" value="ECO:0000315"/>
    <property type="project" value="dictyBase"/>
</dbReference>
<dbReference type="GO" id="GO:0033298">
    <property type="term" value="P:contractile vacuole organization"/>
    <property type="evidence" value="ECO:0000315"/>
    <property type="project" value="dictyBase"/>
</dbReference>
<dbReference type="GO" id="GO:0006887">
    <property type="term" value="P:exocytosis"/>
    <property type="evidence" value="ECO:0000318"/>
    <property type="project" value="GO_Central"/>
</dbReference>
<dbReference type="GO" id="GO:0007231">
    <property type="term" value="P:osmosensory signaling pathway"/>
    <property type="evidence" value="ECO:0000315"/>
    <property type="project" value="UniProtKB"/>
</dbReference>
<dbReference type="GO" id="GO:1903778">
    <property type="term" value="P:protein localization to vacuolar membrane"/>
    <property type="evidence" value="ECO:0000315"/>
    <property type="project" value="dictyBase"/>
</dbReference>
<dbReference type="GO" id="GO:0015031">
    <property type="term" value="P:protein transport"/>
    <property type="evidence" value="ECO:0007669"/>
    <property type="project" value="UniProtKB-KW"/>
</dbReference>
<dbReference type="GO" id="GO:0032482">
    <property type="term" value="P:Rab protein signal transduction"/>
    <property type="evidence" value="ECO:0000315"/>
    <property type="project" value="dictyBase"/>
</dbReference>
<dbReference type="GO" id="GO:0007264">
    <property type="term" value="P:small GTPase-mediated signal transduction"/>
    <property type="evidence" value="ECO:0000314"/>
    <property type="project" value="UniProtKB"/>
</dbReference>
<dbReference type="CDD" id="cd01868">
    <property type="entry name" value="Rab11_like"/>
    <property type="match status" value="1"/>
</dbReference>
<dbReference type="FunFam" id="3.40.50.300:FF:000067">
    <property type="entry name" value="ras-related protein RABA1f"/>
    <property type="match status" value="1"/>
</dbReference>
<dbReference type="Gene3D" id="3.40.50.300">
    <property type="entry name" value="P-loop containing nucleotide triphosphate hydrolases"/>
    <property type="match status" value="1"/>
</dbReference>
<dbReference type="InterPro" id="IPR027417">
    <property type="entry name" value="P-loop_NTPase"/>
</dbReference>
<dbReference type="InterPro" id="IPR050209">
    <property type="entry name" value="Rab_GTPases_membrane_traffic"/>
</dbReference>
<dbReference type="InterPro" id="IPR005225">
    <property type="entry name" value="Small_GTP-bd"/>
</dbReference>
<dbReference type="InterPro" id="IPR001806">
    <property type="entry name" value="Small_GTPase"/>
</dbReference>
<dbReference type="NCBIfam" id="TIGR00231">
    <property type="entry name" value="small_GTP"/>
    <property type="match status" value="1"/>
</dbReference>
<dbReference type="PANTHER" id="PTHR47979">
    <property type="entry name" value="DRAB11-RELATED"/>
    <property type="match status" value="1"/>
</dbReference>
<dbReference type="Pfam" id="PF00071">
    <property type="entry name" value="Ras"/>
    <property type="match status" value="1"/>
</dbReference>
<dbReference type="PRINTS" id="PR00449">
    <property type="entry name" value="RASTRNSFRMNG"/>
</dbReference>
<dbReference type="SMART" id="SM00175">
    <property type="entry name" value="RAB"/>
    <property type="match status" value="1"/>
</dbReference>
<dbReference type="SMART" id="SM00176">
    <property type="entry name" value="RAN"/>
    <property type="match status" value="1"/>
</dbReference>
<dbReference type="SMART" id="SM00173">
    <property type="entry name" value="RAS"/>
    <property type="match status" value="1"/>
</dbReference>
<dbReference type="SMART" id="SM00174">
    <property type="entry name" value="RHO"/>
    <property type="match status" value="1"/>
</dbReference>
<dbReference type="SUPFAM" id="SSF52540">
    <property type="entry name" value="P-loop containing nucleoside triphosphate hydrolases"/>
    <property type="match status" value="1"/>
</dbReference>
<dbReference type="PROSITE" id="PS51419">
    <property type="entry name" value="RAB"/>
    <property type="match status" value="1"/>
</dbReference>
<protein>
    <recommendedName>
        <fullName>Ras-related protein Rab-11A</fullName>
    </recommendedName>
</protein>
<evidence type="ECO:0000250" key="1"/>
<evidence type="ECO:0000250" key="2">
    <source>
        <dbReference type="UniProtKB" id="P62491"/>
    </source>
</evidence>
<evidence type="ECO:0000269" key="3">
    <source>
    </source>
</evidence>
<evidence type="ECO:0000305" key="4"/>
<reference key="1">
    <citation type="journal article" date="2001" name="J. Cell Sci.">
        <title>Rab11-like GTPase associates with and regulates the structure and function of the contractile vacuole system in dictyostelium.</title>
        <authorList>
            <person name="Harris E."/>
            <person name="Yoshida K."/>
            <person name="Cardelli J.A."/>
            <person name="Bush J.M. IV"/>
        </authorList>
    </citation>
    <scope>NUCLEOTIDE SEQUENCE [MRNA]</scope>
    <scope>FUNCTION</scope>
    <scope>SUBCELLULAR LOCATION</scope>
    <scope>MUTAGENESIS OF ASN-126</scope>
    <source>
        <strain>AX3</strain>
    </source>
</reference>
<reference key="2">
    <citation type="journal article" date="2005" name="Nature">
        <title>The genome of the social amoeba Dictyostelium discoideum.</title>
        <authorList>
            <person name="Eichinger L."/>
            <person name="Pachebat J.A."/>
            <person name="Gloeckner G."/>
            <person name="Rajandream M.A."/>
            <person name="Sucgang R."/>
            <person name="Berriman M."/>
            <person name="Song J."/>
            <person name="Olsen R."/>
            <person name="Szafranski K."/>
            <person name="Xu Q."/>
            <person name="Tunggal B."/>
            <person name="Kummerfeld S."/>
            <person name="Madera M."/>
            <person name="Konfortov B.A."/>
            <person name="Rivero F."/>
            <person name="Bankier A.T."/>
            <person name="Lehmann R."/>
            <person name="Hamlin N."/>
            <person name="Davies R."/>
            <person name="Gaudet P."/>
            <person name="Fey P."/>
            <person name="Pilcher K."/>
            <person name="Chen G."/>
            <person name="Saunders D."/>
            <person name="Sodergren E.J."/>
            <person name="Davis P."/>
            <person name="Kerhornou A."/>
            <person name="Nie X."/>
            <person name="Hall N."/>
            <person name="Anjard C."/>
            <person name="Hemphill L."/>
            <person name="Bason N."/>
            <person name="Farbrother P."/>
            <person name="Desany B."/>
            <person name="Just E."/>
            <person name="Morio T."/>
            <person name="Rost R."/>
            <person name="Churcher C.M."/>
            <person name="Cooper J."/>
            <person name="Haydock S."/>
            <person name="van Driessche N."/>
            <person name="Cronin A."/>
            <person name="Goodhead I."/>
            <person name="Muzny D.M."/>
            <person name="Mourier T."/>
            <person name="Pain A."/>
            <person name="Lu M."/>
            <person name="Harper D."/>
            <person name="Lindsay R."/>
            <person name="Hauser H."/>
            <person name="James K.D."/>
            <person name="Quiles M."/>
            <person name="Madan Babu M."/>
            <person name="Saito T."/>
            <person name="Buchrieser C."/>
            <person name="Wardroper A."/>
            <person name="Felder M."/>
            <person name="Thangavelu M."/>
            <person name="Johnson D."/>
            <person name="Knights A."/>
            <person name="Loulseged H."/>
            <person name="Mungall K.L."/>
            <person name="Oliver K."/>
            <person name="Price C."/>
            <person name="Quail M.A."/>
            <person name="Urushihara H."/>
            <person name="Hernandez J."/>
            <person name="Rabbinowitsch E."/>
            <person name="Steffen D."/>
            <person name="Sanders M."/>
            <person name="Ma J."/>
            <person name="Kohara Y."/>
            <person name="Sharp S."/>
            <person name="Simmonds M.N."/>
            <person name="Spiegler S."/>
            <person name="Tivey A."/>
            <person name="Sugano S."/>
            <person name="White B."/>
            <person name="Walker D."/>
            <person name="Woodward J.R."/>
            <person name="Winckler T."/>
            <person name="Tanaka Y."/>
            <person name="Shaulsky G."/>
            <person name="Schleicher M."/>
            <person name="Weinstock G.M."/>
            <person name="Rosenthal A."/>
            <person name="Cox E.C."/>
            <person name="Chisholm R.L."/>
            <person name="Gibbs R.A."/>
            <person name="Loomis W.F."/>
            <person name="Platzer M."/>
            <person name="Kay R.R."/>
            <person name="Williams J.G."/>
            <person name="Dear P.H."/>
            <person name="Noegel A.A."/>
            <person name="Barrell B.G."/>
            <person name="Kuspa A."/>
        </authorList>
    </citation>
    <scope>NUCLEOTIDE SEQUENCE [LARGE SCALE GENOMIC DNA]</scope>
    <source>
        <strain>AX4</strain>
    </source>
</reference>
<reference key="3">
    <citation type="journal article" date="2006" name="Mol. Cell. Proteomics">
        <title>Proteomics fingerprinting of phagosome maturation and evidence for the role of a Galpha during uptake.</title>
        <authorList>
            <person name="Gotthardt D."/>
            <person name="Blancheteau V."/>
            <person name="Bosserhoff A."/>
            <person name="Ruppert T."/>
            <person name="Delorenzi M."/>
            <person name="Soldati T."/>
        </authorList>
    </citation>
    <scope>IDENTIFICATION BY MASS SPECTROMETRY [LARGE SCALE ANALYSIS]</scope>
    <source>
        <strain>AX2</strain>
    </source>
</reference>
<organism>
    <name type="scientific">Dictyostelium discoideum</name>
    <name type="common">Social amoeba</name>
    <dbReference type="NCBI Taxonomy" id="44689"/>
    <lineage>
        <taxon>Eukaryota</taxon>
        <taxon>Amoebozoa</taxon>
        <taxon>Evosea</taxon>
        <taxon>Eumycetozoa</taxon>
        <taxon>Dictyostelia</taxon>
        <taxon>Dictyosteliales</taxon>
        <taxon>Dictyosteliaceae</taxon>
        <taxon>Dictyostelium</taxon>
    </lineage>
</organism>